<proteinExistence type="inferred from homology"/>
<organism>
    <name type="scientific">Buchnera aphidicola subsp. Baizongia pistaciae (strain Bp)</name>
    <dbReference type="NCBI Taxonomy" id="224915"/>
    <lineage>
        <taxon>Bacteria</taxon>
        <taxon>Pseudomonadati</taxon>
        <taxon>Pseudomonadota</taxon>
        <taxon>Gammaproteobacteria</taxon>
        <taxon>Enterobacterales</taxon>
        <taxon>Erwiniaceae</taxon>
        <taxon>Buchnera</taxon>
    </lineage>
</organism>
<gene>
    <name type="ordered locus">bbp_411</name>
</gene>
<sequence length="394" mass="44671">MSFDEIKTHNKKAIIGIFMIFSLRVFGMFMIVPVLSTYGMCLKNSNIFLVGVAIGIYGIFQIIFQIPYGWLSDKYGQKLIINIGLLCFLLGNIIAWSSNSIWGIILGRGLQGSGAISSVCMTLLSELVLPHNRIKIMGLLGVSFGISFFLAVILSPIIVNMFGFYCLFLINSLLSIFCLFFGMFYIPASLLNKNVVCNFRSEISNFFKILSNRVLCQINLSVFLIHFFLMCNFIIIPVELKKIFEFFEYVPEIIYIVILLVSFLIVLFCICFIQSKVLYSNITITTSAFLFVLCYGIFLLFGHNNISLILGLQIFFIAFIFLETILPALVNKFSSKNYKSTTMAIYSTSQFLGSSMGGIIGGILFSYLNYFEVLFFEFVVSILWFITSILYLIK</sequence>
<protein>
    <recommendedName>
        <fullName>Uncharacterized transporter bbp_411</fullName>
    </recommendedName>
</protein>
<reference key="1">
    <citation type="journal article" date="2003" name="Proc. Natl. Acad. Sci. U.S.A.">
        <title>Reductive genome evolution in Buchnera aphidicola.</title>
        <authorList>
            <person name="van Ham R.C.H.J."/>
            <person name="Kamerbeek J."/>
            <person name="Palacios C."/>
            <person name="Rausell C."/>
            <person name="Abascal F."/>
            <person name="Bastolla U."/>
            <person name="Fernandez J.M."/>
            <person name="Jimenez L."/>
            <person name="Postigo M."/>
            <person name="Silva F.J."/>
            <person name="Tamames J."/>
            <person name="Viguera E."/>
            <person name="Latorre A."/>
            <person name="Valencia A."/>
            <person name="Moran F."/>
            <person name="Moya A."/>
        </authorList>
    </citation>
    <scope>NUCLEOTIDE SEQUENCE [LARGE SCALE GENOMIC DNA]</scope>
    <source>
        <strain>Bp</strain>
    </source>
</reference>
<dbReference type="EMBL" id="AE016826">
    <property type="protein sequence ID" value="AAO27121.1"/>
    <property type="molecule type" value="Genomic_DNA"/>
</dbReference>
<dbReference type="RefSeq" id="WP_011091522.1">
    <property type="nucleotide sequence ID" value="NC_004545.1"/>
</dbReference>
<dbReference type="SMR" id="Q89AA9"/>
<dbReference type="STRING" id="224915.bbp_411"/>
<dbReference type="KEGG" id="bab:bbp_411"/>
<dbReference type="eggNOG" id="COG2814">
    <property type="taxonomic scope" value="Bacteria"/>
</dbReference>
<dbReference type="HOGENOM" id="CLU_001265_10_0_6"/>
<dbReference type="Proteomes" id="UP000000601">
    <property type="component" value="Chromosome"/>
</dbReference>
<dbReference type="GO" id="GO:0005886">
    <property type="term" value="C:plasma membrane"/>
    <property type="evidence" value="ECO:0007669"/>
    <property type="project" value="UniProtKB-SubCell"/>
</dbReference>
<dbReference type="GO" id="GO:0022857">
    <property type="term" value="F:transmembrane transporter activity"/>
    <property type="evidence" value="ECO:0007669"/>
    <property type="project" value="InterPro"/>
</dbReference>
<dbReference type="CDD" id="cd17472">
    <property type="entry name" value="MFS_YajR_like"/>
    <property type="match status" value="1"/>
</dbReference>
<dbReference type="Gene3D" id="1.20.1250.20">
    <property type="entry name" value="MFS general substrate transporter like domains"/>
    <property type="match status" value="1"/>
</dbReference>
<dbReference type="InterPro" id="IPR011701">
    <property type="entry name" value="MFS"/>
</dbReference>
<dbReference type="InterPro" id="IPR020846">
    <property type="entry name" value="MFS_dom"/>
</dbReference>
<dbReference type="InterPro" id="IPR036259">
    <property type="entry name" value="MFS_trans_sf"/>
</dbReference>
<dbReference type="InterPro" id="IPR050171">
    <property type="entry name" value="MFS_Transporters"/>
</dbReference>
<dbReference type="PANTHER" id="PTHR23517:SF2">
    <property type="entry name" value="MULTIDRUG RESISTANCE PROTEIN MDTH"/>
    <property type="match status" value="1"/>
</dbReference>
<dbReference type="PANTHER" id="PTHR23517">
    <property type="entry name" value="RESISTANCE PROTEIN MDTM, PUTATIVE-RELATED-RELATED"/>
    <property type="match status" value="1"/>
</dbReference>
<dbReference type="Pfam" id="PF07690">
    <property type="entry name" value="MFS_1"/>
    <property type="match status" value="1"/>
</dbReference>
<dbReference type="SUPFAM" id="SSF103473">
    <property type="entry name" value="MFS general substrate transporter"/>
    <property type="match status" value="1"/>
</dbReference>
<dbReference type="PROSITE" id="PS50850">
    <property type="entry name" value="MFS"/>
    <property type="match status" value="1"/>
</dbReference>
<keyword id="KW-1003">Cell membrane</keyword>
<keyword id="KW-0472">Membrane</keyword>
<keyword id="KW-1185">Reference proteome</keyword>
<keyword id="KW-0812">Transmembrane</keyword>
<keyword id="KW-1133">Transmembrane helix</keyword>
<keyword id="KW-0813">Transport</keyword>
<accession>Q89AA9</accession>
<comment type="subcellular location">
    <subcellularLocation>
        <location evidence="2">Cell membrane</location>
        <topology evidence="2">Multi-pass membrane protein</topology>
    </subcellularLocation>
</comment>
<comment type="similarity">
    <text evidence="2">Belongs to the major facilitator superfamily.</text>
</comment>
<name>Y411_BUCBP</name>
<evidence type="ECO:0000255" key="1"/>
<evidence type="ECO:0000305" key="2"/>
<feature type="chain" id="PRO_0000173414" description="Uncharacterized transporter bbp_411">
    <location>
        <begin position="1"/>
        <end position="394"/>
    </location>
</feature>
<feature type="transmembrane region" description="Helical" evidence="1">
    <location>
        <begin position="13"/>
        <end position="35"/>
    </location>
</feature>
<feature type="transmembrane region" description="Helical" evidence="1">
    <location>
        <begin position="50"/>
        <end position="72"/>
    </location>
</feature>
<feature type="transmembrane region" description="Helical" evidence="1">
    <location>
        <begin position="79"/>
        <end position="97"/>
    </location>
</feature>
<feature type="transmembrane region" description="Helical" evidence="1">
    <location>
        <begin position="107"/>
        <end position="129"/>
    </location>
</feature>
<feature type="transmembrane region" description="Helical" evidence="1">
    <location>
        <begin position="136"/>
        <end position="158"/>
    </location>
</feature>
<feature type="transmembrane region" description="Helical" evidence="1">
    <location>
        <begin position="168"/>
        <end position="190"/>
    </location>
</feature>
<feature type="transmembrane region" description="Helical" evidence="1">
    <location>
        <begin position="218"/>
        <end position="240"/>
    </location>
</feature>
<feature type="transmembrane region" description="Helical" evidence="1">
    <location>
        <begin position="250"/>
        <end position="272"/>
    </location>
</feature>
<feature type="transmembrane region" description="Helical" evidence="1">
    <location>
        <begin position="277"/>
        <end position="299"/>
    </location>
</feature>
<feature type="transmembrane region" description="Helical" evidence="1">
    <location>
        <begin position="309"/>
        <end position="331"/>
    </location>
</feature>
<feature type="transmembrane region" description="Helical" evidence="1">
    <location>
        <begin position="344"/>
        <end position="366"/>
    </location>
</feature>
<feature type="transmembrane region" description="Helical" evidence="1">
    <location>
        <begin position="371"/>
        <end position="393"/>
    </location>
</feature>